<sequence>MKTVILFSFLLVLLGCLEAGHAQRDPEFSSKARQMLAVFGNSEVDRYTKSRNLPALIEFYEKYSSRLPLTVQDRTYANNVVRRYRAQNNQQVDGVPAQGGIGLAFALLLPFAMSIVEGIAKAIRE</sequence>
<name>TOTF_DROSI</name>
<reference evidence="3" key="1">
    <citation type="journal article" date="2007" name="Nature">
        <title>Evolution of genes and genomes on the Drosophila phylogeny.</title>
        <authorList>
            <consortium name="Drosophila 12 genomes consortium"/>
        </authorList>
    </citation>
    <scope>NUCLEOTIDE SEQUENCE [LARGE SCALE GENOMIC DNA]</scope>
</reference>
<accession>B4QAF0</accession>
<dbReference type="EMBL" id="CM000361">
    <property type="protein sequence ID" value="EDX05567.1"/>
    <property type="molecule type" value="Genomic_DNA"/>
</dbReference>
<dbReference type="SMR" id="B4QAF0"/>
<dbReference type="STRING" id="7240.B4QAF0"/>
<dbReference type="EnsemblMetazoa" id="FBtr0360926">
    <property type="protein sequence ID" value="FBpp0324704"/>
    <property type="gene ID" value="FBgn0193151"/>
</dbReference>
<dbReference type="EnsemblMetazoa" id="XM_016178045.3">
    <property type="protein sequence ID" value="XP_016025603.2"/>
    <property type="gene ID" value="LOC27206495"/>
</dbReference>
<dbReference type="HOGENOM" id="CLU_158853_0_0_1"/>
<dbReference type="OMA" id="QERSYAN"/>
<dbReference type="OrthoDB" id="7846480at2759"/>
<dbReference type="PhylomeDB" id="B4QAF0"/>
<dbReference type="Proteomes" id="UP000000304">
    <property type="component" value="Chromosome 2L"/>
</dbReference>
<dbReference type="Bgee" id="FBgn0193151">
    <property type="expression patterns" value="Expressed in embryo and 1 other cell type or tissue"/>
</dbReference>
<dbReference type="GO" id="GO:0005615">
    <property type="term" value="C:extracellular space"/>
    <property type="evidence" value="ECO:0000250"/>
    <property type="project" value="UniProtKB"/>
</dbReference>
<dbReference type="GO" id="GO:0034605">
    <property type="term" value="P:cellular response to heat"/>
    <property type="evidence" value="ECO:0007669"/>
    <property type="project" value="EnsemblMetazoa"/>
</dbReference>
<dbReference type="GO" id="GO:0034644">
    <property type="term" value="P:cellular response to UV"/>
    <property type="evidence" value="ECO:0007669"/>
    <property type="project" value="EnsemblMetazoa"/>
</dbReference>
<dbReference type="GO" id="GO:0045087">
    <property type="term" value="P:innate immune response"/>
    <property type="evidence" value="ECO:0007669"/>
    <property type="project" value="UniProtKB-KW"/>
</dbReference>
<dbReference type="GO" id="GO:0009617">
    <property type="term" value="P:response to bacterium"/>
    <property type="evidence" value="ECO:0000250"/>
    <property type="project" value="UniProtKB"/>
</dbReference>
<dbReference type="GO" id="GO:0009408">
    <property type="term" value="P:response to heat"/>
    <property type="evidence" value="ECO:0000250"/>
    <property type="project" value="UniProtKB"/>
</dbReference>
<dbReference type="GO" id="GO:0009411">
    <property type="term" value="P:response to UV"/>
    <property type="evidence" value="ECO:0000250"/>
    <property type="project" value="UniProtKB"/>
</dbReference>
<dbReference type="GO" id="GO:0009615">
    <property type="term" value="P:response to virus"/>
    <property type="evidence" value="ECO:0007669"/>
    <property type="project" value="EnsemblMetazoa"/>
</dbReference>
<dbReference type="InterPro" id="IPR010825">
    <property type="entry name" value="Turandot"/>
</dbReference>
<dbReference type="Pfam" id="PF07240">
    <property type="entry name" value="Turandot"/>
    <property type="match status" value="1"/>
</dbReference>
<gene>
    <name evidence="3" type="primary">TotF</name>
    <name type="ORF">GD21729</name>
</gene>
<feature type="signal peptide" evidence="2">
    <location>
        <begin position="1"/>
        <end position="22"/>
    </location>
</feature>
<feature type="chain" id="PRO_0000354994" description="Protein Turandot F">
    <location>
        <begin position="23"/>
        <end position="125"/>
    </location>
</feature>
<proteinExistence type="inferred from homology"/>
<comment type="function">
    <text evidence="1">A humoral factor that may play a role in stress tolerance.</text>
</comment>
<comment type="subcellular location">
    <subcellularLocation>
        <location evidence="1">Secreted</location>
    </subcellularLocation>
</comment>
<comment type="similarity">
    <text evidence="2">Belongs to the Turandot family.</text>
</comment>
<evidence type="ECO:0000250" key="1">
    <source>
        <dbReference type="UniProtKB" id="Q9VIR2"/>
    </source>
</evidence>
<evidence type="ECO:0000255" key="2"/>
<evidence type="ECO:0000312" key="3">
    <source>
        <dbReference type="EMBL" id="EDX05567.1"/>
    </source>
</evidence>
<keyword id="KW-0391">Immunity</keyword>
<keyword id="KW-0399">Innate immunity</keyword>
<keyword id="KW-1185">Reference proteome</keyword>
<keyword id="KW-0964">Secreted</keyword>
<keyword id="KW-0732">Signal</keyword>
<organism>
    <name type="scientific">Drosophila simulans</name>
    <name type="common">Fruit fly</name>
    <dbReference type="NCBI Taxonomy" id="7240"/>
    <lineage>
        <taxon>Eukaryota</taxon>
        <taxon>Metazoa</taxon>
        <taxon>Ecdysozoa</taxon>
        <taxon>Arthropoda</taxon>
        <taxon>Hexapoda</taxon>
        <taxon>Insecta</taxon>
        <taxon>Pterygota</taxon>
        <taxon>Neoptera</taxon>
        <taxon>Endopterygota</taxon>
        <taxon>Diptera</taxon>
        <taxon>Brachycera</taxon>
        <taxon>Muscomorpha</taxon>
        <taxon>Ephydroidea</taxon>
        <taxon>Drosophilidae</taxon>
        <taxon>Drosophila</taxon>
        <taxon>Sophophora</taxon>
    </lineage>
</organism>
<protein>
    <recommendedName>
        <fullName>Protein Turandot F</fullName>
    </recommendedName>
</protein>